<dbReference type="EC" id="3.5.3.12" evidence="1"/>
<dbReference type="EMBL" id="AL590842">
    <property type="protein sequence ID" value="CAL19605.1"/>
    <property type="status" value="ALT_INIT"/>
    <property type="molecule type" value="Genomic_DNA"/>
</dbReference>
<dbReference type="EMBL" id="AE009952">
    <property type="protein sequence ID" value="AAM86875.1"/>
    <property type="status" value="ALT_INIT"/>
    <property type="molecule type" value="Genomic_DNA"/>
</dbReference>
<dbReference type="EMBL" id="AE017042">
    <property type="protein sequence ID" value="AAS63657.1"/>
    <property type="status" value="ALT_INIT"/>
    <property type="molecule type" value="Genomic_DNA"/>
</dbReference>
<dbReference type="PIR" id="AC0115">
    <property type="entry name" value="AC0115"/>
</dbReference>
<dbReference type="RefSeq" id="YP_002345986.1">
    <property type="nucleotide sequence ID" value="NC_003143.1"/>
</dbReference>
<dbReference type="SMR" id="Q8ZHG0"/>
<dbReference type="IntAct" id="Q8ZHG0">
    <property type="interactions" value="8"/>
</dbReference>
<dbReference type="STRING" id="214092.YPO0939"/>
<dbReference type="PaxDb" id="214092-YPO0939"/>
<dbReference type="DNASU" id="1148272"/>
<dbReference type="EnsemblBacteria" id="AAS63657">
    <property type="protein sequence ID" value="AAS63657"/>
    <property type="gene ID" value="YP_3503"/>
</dbReference>
<dbReference type="KEGG" id="ype:YPO0939"/>
<dbReference type="KEGG" id="ypk:y3325"/>
<dbReference type="KEGG" id="ypm:YP_3503"/>
<dbReference type="PATRIC" id="fig|214092.21.peg.1217"/>
<dbReference type="eggNOG" id="COG2957">
    <property type="taxonomic scope" value="Bacteria"/>
</dbReference>
<dbReference type="HOGENOM" id="CLU_037682_1_0_6"/>
<dbReference type="Proteomes" id="UP000000815">
    <property type="component" value="Chromosome"/>
</dbReference>
<dbReference type="Proteomes" id="UP000001019">
    <property type="component" value="Chromosome"/>
</dbReference>
<dbReference type="Proteomes" id="UP000002490">
    <property type="component" value="Chromosome"/>
</dbReference>
<dbReference type="GO" id="GO:0047632">
    <property type="term" value="F:agmatine deiminase activity"/>
    <property type="evidence" value="ECO:0007669"/>
    <property type="project" value="UniProtKB-UniRule"/>
</dbReference>
<dbReference type="GO" id="GO:0004668">
    <property type="term" value="F:protein-arginine deiminase activity"/>
    <property type="evidence" value="ECO:0007669"/>
    <property type="project" value="InterPro"/>
</dbReference>
<dbReference type="GO" id="GO:0009446">
    <property type="term" value="P:putrescine biosynthetic process"/>
    <property type="evidence" value="ECO:0007669"/>
    <property type="project" value="InterPro"/>
</dbReference>
<dbReference type="Gene3D" id="3.75.10.10">
    <property type="entry name" value="L-arginine/glycine Amidinotransferase, Chain A"/>
    <property type="match status" value="1"/>
</dbReference>
<dbReference type="HAMAP" id="MF_01841">
    <property type="entry name" value="Agmatine_deimin"/>
    <property type="match status" value="1"/>
</dbReference>
<dbReference type="InterPro" id="IPR017754">
    <property type="entry name" value="Agmatine_deiminase"/>
</dbReference>
<dbReference type="InterPro" id="IPR007466">
    <property type="entry name" value="Peptidyl-Arg-deiminase_porph"/>
</dbReference>
<dbReference type="NCBIfam" id="TIGR03380">
    <property type="entry name" value="agmatine_aguA"/>
    <property type="match status" value="1"/>
</dbReference>
<dbReference type="NCBIfam" id="NF010070">
    <property type="entry name" value="PRK13551.1"/>
    <property type="match status" value="1"/>
</dbReference>
<dbReference type="PANTHER" id="PTHR31377">
    <property type="entry name" value="AGMATINE DEIMINASE-RELATED"/>
    <property type="match status" value="1"/>
</dbReference>
<dbReference type="PANTHER" id="PTHR31377:SF0">
    <property type="entry name" value="AGMATINE DEIMINASE-RELATED"/>
    <property type="match status" value="1"/>
</dbReference>
<dbReference type="Pfam" id="PF04371">
    <property type="entry name" value="PAD_porph"/>
    <property type="match status" value="1"/>
</dbReference>
<dbReference type="SUPFAM" id="SSF55909">
    <property type="entry name" value="Pentein"/>
    <property type="match status" value="1"/>
</dbReference>
<evidence type="ECO:0000255" key="1">
    <source>
        <dbReference type="HAMAP-Rule" id="MF_01841"/>
    </source>
</evidence>
<evidence type="ECO:0000305" key="2"/>
<accession>Q8ZHG0</accession>
<accession>Q0WIA2</accession>
<accession>Q74QH2</accession>
<accession>Q8CKL4</accession>
<proteinExistence type="inferred from homology"/>
<feature type="chain" id="PRO_0000194348" description="Putative agmatine deiminase">
    <location>
        <begin position="1"/>
        <end position="365"/>
    </location>
</feature>
<feature type="active site" description="Amidino-cysteine intermediate" evidence="1">
    <location>
        <position position="357"/>
    </location>
</feature>
<protein>
    <recommendedName>
        <fullName evidence="1">Putative agmatine deiminase</fullName>
        <ecNumber evidence="1">3.5.3.12</ecNumber>
    </recommendedName>
    <alternativeName>
        <fullName evidence="1">Agmatine iminohydrolase</fullName>
    </alternativeName>
</protein>
<keyword id="KW-0378">Hydrolase</keyword>
<keyword id="KW-1185">Reference proteome</keyword>
<comment type="catalytic activity">
    <reaction evidence="1">
        <text>agmatine + H2O = N-carbamoylputrescine + NH4(+)</text>
        <dbReference type="Rhea" id="RHEA:18037"/>
        <dbReference type="ChEBI" id="CHEBI:15377"/>
        <dbReference type="ChEBI" id="CHEBI:28938"/>
        <dbReference type="ChEBI" id="CHEBI:58145"/>
        <dbReference type="ChEBI" id="CHEBI:58318"/>
        <dbReference type="EC" id="3.5.3.12"/>
    </reaction>
</comment>
<comment type="similarity">
    <text evidence="1">Belongs to the agmatine deiminase family.</text>
</comment>
<comment type="sequence caution" evidence="2">
    <conflict type="erroneous initiation">
        <sequence resource="EMBL-CDS" id="AAM86875"/>
    </conflict>
</comment>
<comment type="sequence caution" evidence="2">
    <conflict type="erroneous initiation">
        <sequence resource="EMBL-CDS" id="AAS63657"/>
    </conflict>
</comment>
<comment type="sequence caution" evidence="2">
    <conflict type="erroneous initiation">
        <sequence resource="EMBL-CDS" id="CAL19605"/>
    </conflict>
</comment>
<reference key="1">
    <citation type="journal article" date="2001" name="Nature">
        <title>Genome sequence of Yersinia pestis, the causative agent of plague.</title>
        <authorList>
            <person name="Parkhill J."/>
            <person name="Wren B.W."/>
            <person name="Thomson N.R."/>
            <person name="Titball R.W."/>
            <person name="Holden M.T.G."/>
            <person name="Prentice M.B."/>
            <person name="Sebaihia M."/>
            <person name="James K.D."/>
            <person name="Churcher C.M."/>
            <person name="Mungall K.L."/>
            <person name="Baker S."/>
            <person name="Basham D."/>
            <person name="Bentley S.D."/>
            <person name="Brooks K."/>
            <person name="Cerdeno-Tarraga A.-M."/>
            <person name="Chillingworth T."/>
            <person name="Cronin A."/>
            <person name="Davies R.M."/>
            <person name="Davis P."/>
            <person name="Dougan G."/>
            <person name="Feltwell T."/>
            <person name="Hamlin N."/>
            <person name="Holroyd S."/>
            <person name="Jagels K."/>
            <person name="Karlyshev A.V."/>
            <person name="Leather S."/>
            <person name="Moule S."/>
            <person name="Oyston P.C.F."/>
            <person name="Quail M.A."/>
            <person name="Rutherford K.M."/>
            <person name="Simmonds M."/>
            <person name="Skelton J."/>
            <person name="Stevens K."/>
            <person name="Whitehead S."/>
            <person name="Barrell B.G."/>
        </authorList>
    </citation>
    <scope>NUCLEOTIDE SEQUENCE [LARGE SCALE GENOMIC DNA]</scope>
    <source>
        <strain>CO-92 / Biovar Orientalis</strain>
    </source>
</reference>
<reference key="2">
    <citation type="journal article" date="2002" name="J. Bacteriol.">
        <title>Genome sequence of Yersinia pestis KIM.</title>
        <authorList>
            <person name="Deng W."/>
            <person name="Burland V."/>
            <person name="Plunkett G. III"/>
            <person name="Boutin A."/>
            <person name="Mayhew G.F."/>
            <person name="Liss P."/>
            <person name="Perna N.T."/>
            <person name="Rose D.J."/>
            <person name="Mau B."/>
            <person name="Zhou S."/>
            <person name="Schwartz D.C."/>
            <person name="Fetherston J.D."/>
            <person name="Lindler L.E."/>
            <person name="Brubaker R.R."/>
            <person name="Plano G.V."/>
            <person name="Straley S.C."/>
            <person name="McDonough K.A."/>
            <person name="Nilles M.L."/>
            <person name="Matson J.S."/>
            <person name="Blattner F.R."/>
            <person name="Perry R.D."/>
        </authorList>
    </citation>
    <scope>NUCLEOTIDE SEQUENCE [LARGE SCALE GENOMIC DNA]</scope>
    <source>
        <strain>KIM10+ / Biovar Mediaevalis</strain>
    </source>
</reference>
<reference key="3">
    <citation type="journal article" date="2004" name="DNA Res.">
        <title>Complete genome sequence of Yersinia pestis strain 91001, an isolate avirulent to humans.</title>
        <authorList>
            <person name="Song Y."/>
            <person name="Tong Z."/>
            <person name="Wang J."/>
            <person name="Wang L."/>
            <person name="Guo Z."/>
            <person name="Han Y."/>
            <person name="Zhang J."/>
            <person name="Pei D."/>
            <person name="Zhou D."/>
            <person name="Qin H."/>
            <person name="Pang X."/>
            <person name="Han Y."/>
            <person name="Zhai J."/>
            <person name="Li M."/>
            <person name="Cui B."/>
            <person name="Qi Z."/>
            <person name="Jin L."/>
            <person name="Dai R."/>
            <person name="Chen F."/>
            <person name="Li S."/>
            <person name="Ye C."/>
            <person name="Du Z."/>
            <person name="Lin W."/>
            <person name="Wang J."/>
            <person name="Yu J."/>
            <person name="Yang H."/>
            <person name="Wang J."/>
            <person name="Huang P."/>
            <person name="Yang R."/>
        </authorList>
    </citation>
    <scope>NUCLEOTIDE SEQUENCE [LARGE SCALE GENOMIC DNA]</scope>
    <source>
        <strain>91001 / Biovar Mediaevalis</strain>
    </source>
</reference>
<gene>
    <name evidence="1" type="primary">aguA</name>
    <name type="ordered locus">YPO0939</name>
    <name type="ordered locus">y3325</name>
    <name type="ordered locus">YP_3503</name>
</gene>
<organism>
    <name type="scientific">Yersinia pestis</name>
    <dbReference type="NCBI Taxonomy" id="632"/>
    <lineage>
        <taxon>Bacteria</taxon>
        <taxon>Pseudomonadati</taxon>
        <taxon>Pseudomonadota</taxon>
        <taxon>Gammaproteobacteria</taxon>
        <taxon>Enterobacterales</taxon>
        <taxon>Yersiniaceae</taxon>
        <taxon>Yersinia</taxon>
    </lineage>
</organism>
<name>AGUA_YERPE</name>
<sequence length="365" mass="40377">MLQQQALPGTPRQDGFFMPAEWAPQDAVWMLWPYRQDNWRGKAIPAQQTFAKVAEAISRATPVFMGVPAEFMAQAKATMPANVTLVEMASDDAWMRDTGPTMVINGAAERRAVDWQFNAWGGLNGGLYADWQQDEKVAVQVSDFLKNAHYSAPLILEGGSIHTDGEGTLLTTAECLLNPNRNPHLNQAQIEQLLCDYLGVTHFIWLQDGVYNDETDGHIDNMCCFVRPGEVALHWTDDQQDPQYARSVAAFEVLSNTVDAKGRKLKIWKLPAPGPLYNTEEETFDVLTSDAVPRTAGERLAGSYVNFLISNQQIIFPLLDSRTDGQANDLLQQMFPGYAIVGVPAREILLGGGNIHCITQQIPAA</sequence>